<protein>
    <recommendedName>
        <fullName>Probable periplasmic serine endoprotease DegP-like</fullName>
        <ecNumber>3.4.21.107</ecNumber>
    </recommendedName>
    <alternativeName>
        <fullName>Protease Do</fullName>
    </alternativeName>
</protein>
<comment type="function">
    <text evidence="1">Might be efficient in the degradation of transiently denatured and unfolded proteins which accumulate in the periplasm following stress conditions.</text>
</comment>
<comment type="catalytic activity">
    <reaction>
        <text>Acts on substrates that are at least partially unfolded. The cleavage site P1 residue is normally between a pair of hydrophobic residues, such as Val-|-Val.</text>
        <dbReference type="EC" id="3.4.21.107"/>
    </reaction>
</comment>
<comment type="subcellular location">
    <subcellularLocation>
        <location evidence="4">Periplasm</location>
    </subcellularLocation>
</comment>
<comment type="similarity">
    <text evidence="4">Belongs to the peptidase S1C family.</text>
</comment>
<evidence type="ECO:0000250" key="1"/>
<evidence type="ECO:0000255" key="2"/>
<evidence type="ECO:0000255" key="3">
    <source>
        <dbReference type="PROSITE-ProRule" id="PRU00143"/>
    </source>
</evidence>
<evidence type="ECO:0000305" key="4"/>
<dbReference type="EC" id="3.4.21.107"/>
<dbReference type="EMBL" id="FN869568">
    <property type="protein sequence ID" value="CBV42910.1"/>
    <property type="molecule type" value="Genomic_DNA"/>
</dbReference>
<dbReference type="RefSeq" id="WP_013332782.1">
    <property type="nucleotide sequence ID" value="NC_014532.2"/>
</dbReference>
<dbReference type="SMR" id="E1V4H2"/>
<dbReference type="STRING" id="768066.HELO_3026"/>
<dbReference type="GeneID" id="91010389"/>
<dbReference type="KEGG" id="hel:HELO_3026"/>
<dbReference type="eggNOG" id="COG0265">
    <property type="taxonomic scope" value="Bacteria"/>
</dbReference>
<dbReference type="HOGENOM" id="CLU_020120_1_0_6"/>
<dbReference type="OrthoDB" id="9758917at2"/>
<dbReference type="Proteomes" id="UP000008707">
    <property type="component" value="Chromosome"/>
</dbReference>
<dbReference type="GO" id="GO:0030288">
    <property type="term" value="C:outer membrane-bounded periplasmic space"/>
    <property type="evidence" value="ECO:0000250"/>
    <property type="project" value="UniProtKB"/>
</dbReference>
<dbReference type="GO" id="GO:0004252">
    <property type="term" value="F:serine-type endopeptidase activity"/>
    <property type="evidence" value="ECO:0000250"/>
    <property type="project" value="UniProtKB"/>
</dbReference>
<dbReference type="GO" id="GO:0006508">
    <property type="term" value="P:proteolysis"/>
    <property type="evidence" value="ECO:0007669"/>
    <property type="project" value="UniProtKB-KW"/>
</dbReference>
<dbReference type="CDD" id="cd10839">
    <property type="entry name" value="cpPDZ1_DegP-like"/>
    <property type="match status" value="1"/>
</dbReference>
<dbReference type="FunFam" id="2.30.42.10:FF:000037">
    <property type="entry name" value="Periplasmic serine endoprotease DegP-like"/>
    <property type="match status" value="1"/>
</dbReference>
<dbReference type="FunFam" id="2.40.10.120:FF:000007">
    <property type="entry name" value="Periplasmic serine endoprotease DegP-like"/>
    <property type="match status" value="1"/>
</dbReference>
<dbReference type="Gene3D" id="2.30.42.10">
    <property type="match status" value="2"/>
</dbReference>
<dbReference type="Gene3D" id="2.40.10.120">
    <property type="match status" value="1"/>
</dbReference>
<dbReference type="InterPro" id="IPR001478">
    <property type="entry name" value="PDZ"/>
</dbReference>
<dbReference type="InterPro" id="IPR036034">
    <property type="entry name" value="PDZ_sf"/>
</dbReference>
<dbReference type="InterPro" id="IPR011782">
    <property type="entry name" value="Pept_S1C_Do"/>
</dbReference>
<dbReference type="InterPro" id="IPR009003">
    <property type="entry name" value="Peptidase_S1_PA"/>
</dbReference>
<dbReference type="InterPro" id="IPR001940">
    <property type="entry name" value="Peptidase_S1C"/>
</dbReference>
<dbReference type="NCBIfam" id="TIGR02037">
    <property type="entry name" value="degP_htrA_DO"/>
    <property type="match status" value="1"/>
</dbReference>
<dbReference type="PANTHER" id="PTHR22939:SF130">
    <property type="entry name" value="PERIPLASMIC SERINE ENDOPROTEASE DEGP-LIKE-RELATED"/>
    <property type="match status" value="1"/>
</dbReference>
<dbReference type="PANTHER" id="PTHR22939">
    <property type="entry name" value="SERINE PROTEASE FAMILY S1C HTRA-RELATED"/>
    <property type="match status" value="1"/>
</dbReference>
<dbReference type="Pfam" id="PF13180">
    <property type="entry name" value="PDZ_2"/>
    <property type="match status" value="2"/>
</dbReference>
<dbReference type="Pfam" id="PF13365">
    <property type="entry name" value="Trypsin_2"/>
    <property type="match status" value="1"/>
</dbReference>
<dbReference type="PRINTS" id="PR00834">
    <property type="entry name" value="PROTEASES2C"/>
</dbReference>
<dbReference type="SMART" id="SM00228">
    <property type="entry name" value="PDZ"/>
    <property type="match status" value="2"/>
</dbReference>
<dbReference type="SUPFAM" id="SSF50156">
    <property type="entry name" value="PDZ domain-like"/>
    <property type="match status" value="2"/>
</dbReference>
<dbReference type="SUPFAM" id="SSF50494">
    <property type="entry name" value="Trypsin-like serine proteases"/>
    <property type="match status" value="1"/>
</dbReference>
<dbReference type="PROSITE" id="PS50106">
    <property type="entry name" value="PDZ"/>
    <property type="match status" value="2"/>
</dbReference>
<gene>
    <name type="primary">mucD</name>
    <name type="ordered locus">HELO_3026</name>
</gene>
<keyword id="KW-0378">Hydrolase</keyword>
<keyword id="KW-0574">Periplasm</keyword>
<keyword id="KW-0645">Protease</keyword>
<keyword id="KW-0677">Repeat</keyword>
<keyword id="KW-0720">Serine protease</keyword>
<keyword id="KW-0732">Signal</keyword>
<keyword id="KW-0346">Stress response</keyword>
<sequence>MTRMTRHLALWMLLSLAILASQSAMAQKLPDFTSLVEEAAPAVVNISTSRTVETRNMPFGQFGGQELPEIFKHFFGERFGDQMPMPPGAQGHSEERRSLGSGFIISEDGYIMTNAHVVEGADEILVSLNDGRELKAELVGADTKTDVAVLKVDADNLPTLTLGDSEDLKVGQWVAAIGSPFGLDHSVTSGIISAINRTLPRDVYVPFIQTDVAINPGNSGGPLFNLDGEVIGINSQIFTRSGGYMGLSFAIPIDVAMDVADQLRNDGSVSRGWLGVMIQPVSRELADSFGMDKPQGALIADLDPDGPAARDGLKAGDVVLEVDGQTVDSSSALPRLIGRVSPGNDVELKVLRNGEHRNVTVTVGDWPDSQKGAGGSAGDTAPARLGLAVRPLEEGQHDQAIDNGVRVVEVDPTGVAAKAGIRAGDILVSIGEHAVESPEQLSELIGELPEDRAVPVRLYRSGHSYYVALRLAQK</sequence>
<feature type="signal peptide" evidence="2">
    <location>
        <begin position="1"/>
        <end position="26"/>
    </location>
</feature>
<feature type="chain" id="PRO_0000414222" description="Probable periplasmic serine endoprotease DegP-like">
    <location>
        <begin position="27"/>
        <end position="474"/>
    </location>
</feature>
<feature type="domain" description="PDZ 1" evidence="3">
    <location>
        <begin position="263"/>
        <end position="354"/>
    </location>
</feature>
<feature type="domain" description="PDZ 2" evidence="3">
    <location>
        <begin position="360"/>
        <end position="462"/>
    </location>
</feature>
<feature type="active site" description="Charge relay system" evidence="1">
    <location>
        <position position="116"/>
    </location>
</feature>
<feature type="active site" description="Charge relay system" evidence="2">
    <location>
        <position position="146"/>
    </location>
</feature>
<feature type="active site" description="Charge relay system" evidence="1">
    <location>
        <position position="219"/>
    </location>
</feature>
<feature type="binding site" evidence="1">
    <location>
        <begin position="217"/>
        <end position="219"/>
    </location>
    <ligand>
        <name>substrate</name>
    </ligand>
</feature>
<feature type="binding site" evidence="1">
    <location>
        <begin position="274"/>
        <end position="278"/>
    </location>
    <ligand>
        <name>substrate</name>
    </ligand>
</feature>
<name>DEGPL_HALED</name>
<accession>E1V4H2</accession>
<reference key="1">
    <citation type="journal article" date="2011" name="Environ. Microbiol.">
        <title>A blueprint of ectoine metabolism from the genome of the industrial producer Halomonas elongata DSM 2581(T).</title>
        <authorList>
            <person name="Schwibbert K."/>
            <person name="Marin-Sanguino A."/>
            <person name="Bagyan I."/>
            <person name="Heidrich G."/>
            <person name="Lentzen G."/>
            <person name="Seitz H."/>
            <person name="Rampp M."/>
            <person name="Schuster S.C."/>
            <person name="Klenk H.P."/>
            <person name="Pfeiffer F."/>
            <person name="Oesterhelt D."/>
            <person name="Kunte H.J."/>
        </authorList>
    </citation>
    <scope>NUCLEOTIDE SEQUENCE [LARGE SCALE GENOMIC DNA]</scope>
    <source>
        <strain>ATCC 33173 / DSM 2581 / NBRC 15536 / NCIMB 2198 / 1H9</strain>
    </source>
</reference>
<proteinExistence type="inferred from homology"/>
<organism>
    <name type="scientific">Halomonas elongata (strain ATCC 33173 / DSM 2581 / NBRC 15536 / NCIMB 2198 / 1H9)</name>
    <dbReference type="NCBI Taxonomy" id="768066"/>
    <lineage>
        <taxon>Bacteria</taxon>
        <taxon>Pseudomonadati</taxon>
        <taxon>Pseudomonadota</taxon>
        <taxon>Gammaproteobacteria</taxon>
        <taxon>Oceanospirillales</taxon>
        <taxon>Halomonadaceae</taxon>
        <taxon>Halomonas</taxon>
    </lineage>
</organism>